<reference key="1">
    <citation type="journal article" date="2004" name="DNA Res.">
        <title>Complete nucleotide sequence of the sugarcane (Saccharum officinarum) chloroplast genome: a comparative analysis of four monocot chloroplast genomes.</title>
        <authorList>
            <person name="Asano T."/>
            <person name="Tsudzuki T."/>
            <person name="Takahashi S."/>
            <person name="Shimada H."/>
            <person name="Kadowaki K."/>
        </authorList>
    </citation>
    <scope>NUCLEOTIDE SEQUENCE [LARGE SCALE GENOMIC DNA]</scope>
</reference>
<keyword id="KW-0150">Chloroplast</keyword>
<keyword id="KW-0472">Membrane</keyword>
<keyword id="KW-0602">Photosynthesis</keyword>
<keyword id="KW-0604">Photosystem II</keyword>
<keyword id="KW-0934">Plastid</keyword>
<keyword id="KW-0674">Reaction center</keyword>
<keyword id="KW-0793">Thylakoid</keyword>
<keyword id="KW-0812">Transmembrane</keyword>
<keyword id="KW-1133">Transmembrane helix</keyword>
<name>PSBZ_SACOF</name>
<geneLocation type="chloroplast"/>
<sequence length="62" mass="6554">MTIAFQLAVFALIATSSVLVISVPLVFASPDGWSNNKNVVFSGTSLWIGLVFLVAILNSLIS</sequence>
<evidence type="ECO:0000255" key="1">
    <source>
        <dbReference type="HAMAP-Rule" id="MF_00644"/>
    </source>
</evidence>
<proteinExistence type="inferred from homology"/>
<dbReference type="EMBL" id="AP006714">
    <property type="protein sequence ID" value="BAD27278.1"/>
    <property type="molecule type" value="Genomic_DNA"/>
</dbReference>
<dbReference type="RefSeq" id="YP_009389557.1">
    <property type="nucleotide sequence ID" value="NC_035224.1"/>
</dbReference>
<dbReference type="SMR" id="Q6ENX9"/>
<dbReference type="GeneID" id="33347895"/>
<dbReference type="GO" id="GO:0009535">
    <property type="term" value="C:chloroplast thylakoid membrane"/>
    <property type="evidence" value="ECO:0007669"/>
    <property type="project" value="UniProtKB-SubCell"/>
</dbReference>
<dbReference type="GO" id="GO:0009539">
    <property type="term" value="C:photosystem II reaction center"/>
    <property type="evidence" value="ECO:0007669"/>
    <property type="project" value="InterPro"/>
</dbReference>
<dbReference type="GO" id="GO:0015979">
    <property type="term" value="P:photosynthesis"/>
    <property type="evidence" value="ECO:0007669"/>
    <property type="project" value="UniProtKB-UniRule"/>
</dbReference>
<dbReference type="GO" id="GO:0042549">
    <property type="term" value="P:photosystem II stabilization"/>
    <property type="evidence" value="ECO:0007669"/>
    <property type="project" value="InterPro"/>
</dbReference>
<dbReference type="FunFam" id="1.10.287.740:FF:000001">
    <property type="entry name" value="Photosystem II reaction center protein Z"/>
    <property type="match status" value="1"/>
</dbReference>
<dbReference type="Gene3D" id="1.10.287.740">
    <property type="entry name" value="Photosystem II PsbZ, reaction centre"/>
    <property type="match status" value="1"/>
</dbReference>
<dbReference type="HAMAP" id="MF_00644">
    <property type="entry name" value="PSII_PsbZ"/>
    <property type="match status" value="1"/>
</dbReference>
<dbReference type="InterPro" id="IPR002644">
    <property type="entry name" value="PSII_PsbZ"/>
</dbReference>
<dbReference type="InterPro" id="IPR036512">
    <property type="entry name" value="PSII_PsbZ_sf"/>
</dbReference>
<dbReference type="NCBIfam" id="TIGR03043">
    <property type="entry name" value="PS_II_psbZ"/>
    <property type="match status" value="1"/>
</dbReference>
<dbReference type="PANTHER" id="PTHR34971">
    <property type="entry name" value="PHOTOSYSTEM II REACTION CENTER PROTEIN Z"/>
    <property type="match status" value="1"/>
</dbReference>
<dbReference type="PANTHER" id="PTHR34971:SF2">
    <property type="entry name" value="PHOTOSYSTEM II REACTION CENTER PROTEIN Z"/>
    <property type="match status" value="1"/>
</dbReference>
<dbReference type="Pfam" id="PF01737">
    <property type="entry name" value="Ycf9"/>
    <property type="match status" value="1"/>
</dbReference>
<dbReference type="SUPFAM" id="SSF161055">
    <property type="entry name" value="PsbZ-like"/>
    <property type="match status" value="1"/>
</dbReference>
<protein>
    <recommendedName>
        <fullName evidence="1">Photosystem II reaction center protein Z</fullName>
        <shortName evidence="1">PSII-Z</shortName>
    </recommendedName>
</protein>
<accession>Q6ENX9</accession>
<feature type="chain" id="PRO_0000217727" description="Photosystem II reaction center protein Z">
    <location>
        <begin position="1"/>
        <end position="62"/>
    </location>
</feature>
<feature type="transmembrane region" description="Helical" evidence="1">
    <location>
        <begin position="8"/>
        <end position="28"/>
    </location>
</feature>
<feature type="transmembrane region" description="Helical" evidence="1">
    <location>
        <begin position="41"/>
        <end position="61"/>
    </location>
</feature>
<comment type="function">
    <text evidence="1">May control the interaction of photosystem II (PSII) cores with the light-harvesting antenna, regulates electron flow through the 2 photosystem reaction centers. PSII is a light-driven water plastoquinone oxidoreductase, using light energy to abstract electrons from H(2)O, generating a proton gradient subsequently used for ATP formation.</text>
</comment>
<comment type="subunit">
    <text evidence="1">PSII is composed of 1 copy each of membrane proteins PsbA, PsbB, PsbC, PsbD, PsbE, PsbF, PsbH, PsbI, PsbJ, PsbK, PsbL, PsbM, PsbT, PsbY, PsbZ, Psb30/Ycf12, at least 3 peripheral proteins of the oxygen-evolving complex and a large number of cofactors. It forms dimeric complexes.</text>
</comment>
<comment type="subcellular location">
    <subcellularLocation>
        <location evidence="1">Plastid</location>
        <location evidence="1">Chloroplast thylakoid membrane</location>
        <topology evidence="1">Multi-pass membrane protein</topology>
    </subcellularLocation>
</comment>
<comment type="similarity">
    <text evidence="1">Belongs to the PsbZ family.</text>
</comment>
<gene>
    <name evidence="1" type="primary">psbZ</name>
</gene>
<organism>
    <name type="scientific">Saccharum officinarum</name>
    <name type="common">Sugarcane</name>
    <dbReference type="NCBI Taxonomy" id="4547"/>
    <lineage>
        <taxon>Eukaryota</taxon>
        <taxon>Viridiplantae</taxon>
        <taxon>Streptophyta</taxon>
        <taxon>Embryophyta</taxon>
        <taxon>Tracheophyta</taxon>
        <taxon>Spermatophyta</taxon>
        <taxon>Magnoliopsida</taxon>
        <taxon>Liliopsida</taxon>
        <taxon>Poales</taxon>
        <taxon>Poaceae</taxon>
        <taxon>PACMAD clade</taxon>
        <taxon>Panicoideae</taxon>
        <taxon>Andropogonodae</taxon>
        <taxon>Andropogoneae</taxon>
        <taxon>Saccharinae</taxon>
        <taxon>Saccharum</taxon>
        <taxon>Saccharum officinarum species complex</taxon>
    </lineage>
</organism>